<gene>
    <name type="primary">ND4L</name>
</gene>
<evidence type="ECO:0000250" key="1"/>
<evidence type="ECO:0000255" key="2"/>
<evidence type="ECO:0000305" key="3"/>
<accession>Q36903</accession>
<comment type="function">
    <text evidence="1">Core subunit of the mitochondrial membrane respiratory chain NADH dehydrogenase (Complex I) that is believed to belong to the minimal assembly required for catalysis. Complex I functions in the transfer of electrons from NADH to the respiratory chain. The immediate electron acceptor for the enzyme is believed to be ubiquinone (By similarity).</text>
</comment>
<comment type="catalytic activity">
    <reaction>
        <text>a ubiquinone + NADH + 5 H(+)(in) = a ubiquinol + NAD(+) + 4 H(+)(out)</text>
        <dbReference type="Rhea" id="RHEA:29091"/>
        <dbReference type="Rhea" id="RHEA-COMP:9565"/>
        <dbReference type="Rhea" id="RHEA-COMP:9566"/>
        <dbReference type="ChEBI" id="CHEBI:15378"/>
        <dbReference type="ChEBI" id="CHEBI:16389"/>
        <dbReference type="ChEBI" id="CHEBI:17976"/>
        <dbReference type="ChEBI" id="CHEBI:57540"/>
        <dbReference type="ChEBI" id="CHEBI:57945"/>
        <dbReference type="EC" id="7.1.1.2"/>
    </reaction>
</comment>
<comment type="subcellular location">
    <subcellularLocation>
        <location evidence="1">Mitochondrion membrane</location>
        <topology evidence="1">Multi-pass membrane protein</topology>
    </subcellularLocation>
</comment>
<comment type="similarity">
    <text evidence="3">Belongs to the complex I subunit 4L family.</text>
</comment>
<organism>
    <name type="scientific">Wickerhamomyces canadensis</name>
    <name type="common">Yeast</name>
    <name type="synonym">Pichia canadensis</name>
    <dbReference type="NCBI Taxonomy" id="1156965"/>
    <lineage>
        <taxon>Eukaryota</taxon>
        <taxon>Fungi</taxon>
        <taxon>Dikarya</taxon>
        <taxon>Ascomycota</taxon>
        <taxon>Saccharomycotina</taxon>
        <taxon>Saccharomycetes</taxon>
        <taxon>Phaffomycetales</taxon>
        <taxon>Wickerhamomycetaceae</taxon>
        <taxon>Wickerhamomyces</taxon>
    </lineage>
</organism>
<proteinExistence type="inferred from homology"/>
<reference key="1">
    <citation type="journal article" date="1994" name="Mol. Gen. Genet.">
        <title>The mitochondrial genome of yeast Hansenula wingei encodes NADH dehydrogenase subunit genes ND4L and ND5.</title>
        <authorList>
            <person name="Okamoto K."/>
            <person name="Sekito T."/>
            <person name="Yoshida K."/>
        </authorList>
    </citation>
    <scope>NUCLEOTIDE SEQUENCE [LARGE SCALE GENOMIC DNA]</scope>
    <source>
        <strain>21</strain>
    </source>
</reference>
<reference key="2">
    <citation type="journal article" date="1995" name="Curr. Genet.">
        <title>The complete mitochondrial DNA sequence of Hansenula wingei reveals new characteristics of yeast mitochondria.</title>
        <authorList>
            <person name="Sekito T."/>
            <person name="Okamoto K."/>
            <person name="Kitano H."/>
            <person name="Yoshida K."/>
        </authorList>
    </citation>
    <scope>NUCLEOTIDE SEQUENCE [GENOMIC DNA]</scope>
    <source>
        <strain>21</strain>
    </source>
</reference>
<keyword id="KW-0249">Electron transport</keyword>
<keyword id="KW-0472">Membrane</keyword>
<keyword id="KW-0496">Mitochondrion</keyword>
<keyword id="KW-0520">NAD</keyword>
<keyword id="KW-0679">Respiratory chain</keyword>
<keyword id="KW-1278">Translocase</keyword>
<keyword id="KW-0812">Transmembrane</keyword>
<keyword id="KW-1133">Transmembrane helix</keyword>
<keyword id="KW-0813">Transport</keyword>
<keyword id="KW-0830">Ubiquinone</keyword>
<name>NU4LM_WICCA</name>
<dbReference type="EC" id="7.1.1.2"/>
<dbReference type="EMBL" id="D16252">
    <property type="protein sequence ID" value="BAA03778.2"/>
    <property type="molecule type" value="Genomic_DNA"/>
</dbReference>
<dbReference type="EMBL" id="D31785">
    <property type="protein sequence ID" value="BAA06570.2"/>
    <property type="molecule type" value="Genomic_DNA"/>
</dbReference>
<dbReference type="PIR" id="S44477">
    <property type="entry name" value="S44477"/>
</dbReference>
<dbReference type="RefSeq" id="NP_038215.1">
    <property type="nucleotide sequence ID" value="NC_001762.1"/>
</dbReference>
<dbReference type="SMR" id="Q36903"/>
<dbReference type="GeneID" id="800556"/>
<dbReference type="GO" id="GO:0031966">
    <property type="term" value="C:mitochondrial membrane"/>
    <property type="evidence" value="ECO:0007669"/>
    <property type="project" value="UniProtKB-SubCell"/>
</dbReference>
<dbReference type="GO" id="GO:0030964">
    <property type="term" value="C:NADH dehydrogenase complex"/>
    <property type="evidence" value="ECO:0007669"/>
    <property type="project" value="TreeGrafter"/>
</dbReference>
<dbReference type="GO" id="GO:0008137">
    <property type="term" value="F:NADH dehydrogenase (ubiquinone) activity"/>
    <property type="evidence" value="ECO:0007669"/>
    <property type="project" value="UniProtKB-EC"/>
</dbReference>
<dbReference type="GO" id="GO:0042773">
    <property type="term" value="P:ATP synthesis coupled electron transport"/>
    <property type="evidence" value="ECO:0007669"/>
    <property type="project" value="InterPro"/>
</dbReference>
<dbReference type="Gene3D" id="1.10.287.3510">
    <property type="match status" value="1"/>
</dbReference>
<dbReference type="InterPro" id="IPR001133">
    <property type="entry name" value="NADH_UbQ_OxRdtase_chain4L/K"/>
</dbReference>
<dbReference type="InterPro" id="IPR039428">
    <property type="entry name" value="NUOK/Mnh_C1-like"/>
</dbReference>
<dbReference type="PANTHER" id="PTHR11434:SF16">
    <property type="entry name" value="NADH-UBIQUINONE OXIDOREDUCTASE CHAIN 4L"/>
    <property type="match status" value="1"/>
</dbReference>
<dbReference type="PANTHER" id="PTHR11434">
    <property type="entry name" value="NADH-UBIQUINONE OXIDOREDUCTASE SUBUNIT ND4L"/>
    <property type="match status" value="1"/>
</dbReference>
<dbReference type="Pfam" id="PF00420">
    <property type="entry name" value="Oxidored_q2"/>
    <property type="match status" value="1"/>
</dbReference>
<sequence length="93" mass="10048">MRLTILLIIIGLIGYIINSGPLGRTNIIKLFISIEIMLLGVTLLIILSGYNNDDILGLIIGIIVLIITGIESAIGLTILVNYYKIKGSLPTNI</sequence>
<feature type="chain" id="PRO_0000118472" description="NADH-ubiquinone oxidoreductase chain 4L">
    <location>
        <begin position="1"/>
        <end position="93"/>
    </location>
</feature>
<feature type="transmembrane region" description="Helical" evidence="2">
    <location>
        <begin position="3"/>
        <end position="23"/>
    </location>
</feature>
<feature type="transmembrane region" description="Helical" evidence="2">
    <location>
        <begin position="27"/>
        <end position="47"/>
    </location>
</feature>
<feature type="transmembrane region" description="Helical" evidence="2">
    <location>
        <begin position="55"/>
        <end position="75"/>
    </location>
</feature>
<protein>
    <recommendedName>
        <fullName>NADH-ubiquinone oxidoreductase chain 4L</fullName>
        <ecNumber>7.1.1.2</ecNumber>
    </recommendedName>
    <alternativeName>
        <fullName>NADH dehydrogenase subunit 4L</fullName>
    </alternativeName>
</protein>
<geneLocation type="mitochondrion"/>